<sequence length="61" mass="6930">MLNTFSLIGICLNSTLYSSSFFFGKLPEAYAFLNPIVDIMPVIPLFFFLLAFVWQAAVSFR</sequence>
<protein>
    <recommendedName>
        <fullName evidence="1">Photosystem II reaction center protein K</fullName>
        <shortName evidence="1">PSII-K</shortName>
    </recommendedName>
</protein>
<organism>
    <name type="scientific">Solanum bulbocastanum</name>
    <name type="common">Wild potato</name>
    <dbReference type="NCBI Taxonomy" id="147425"/>
    <lineage>
        <taxon>Eukaryota</taxon>
        <taxon>Viridiplantae</taxon>
        <taxon>Streptophyta</taxon>
        <taxon>Embryophyta</taxon>
        <taxon>Tracheophyta</taxon>
        <taxon>Spermatophyta</taxon>
        <taxon>Magnoliopsida</taxon>
        <taxon>eudicotyledons</taxon>
        <taxon>Gunneridae</taxon>
        <taxon>Pentapetalae</taxon>
        <taxon>asterids</taxon>
        <taxon>lamiids</taxon>
        <taxon>Solanales</taxon>
        <taxon>Solanaceae</taxon>
        <taxon>Solanoideae</taxon>
        <taxon>Solaneae</taxon>
        <taxon>Solanum</taxon>
    </lineage>
</organism>
<name>PSBK_SOLBU</name>
<proteinExistence type="inferred from homology"/>
<accession>Q2MIK4</accession>
<reference key="1">
    <citation type="journal article" date="2006" name="Theor. Appl. Genet.">
        <title>Complete chloroplast genome sequences of Solanum bulbocastanum, Solanum lycopersicum and comparative analyses with other Solanaceae genomes.</title>
        <authorList>
            <person name="Daniell H."/>
            <person name="Lee S.-B."/>
            <person name="Grevich J."/>
            <person name="Saski C."/>
            <person name="Quesada-Vargas T."/>
            <person name="Guda C."/>
            <person name="Tomkins J."/>
            <person name="Jansen R.K."/>
        </authorList>
    </citation>
    <scope>NUCLEOTIDE SEQUENCE [LARGE SCALE GENOMIC DNA]</scope>
    <source>
        <strain>cv. PT29</strain>
    </source>
</reference>
<evidence type="ECO:0000255" key="1">
    <source>
        <dbReference type="HAMAP-Rule" id="MF_00441"/>
    </source>
</evidence>
<geneLocation type="chloroplast"/>
<comment type="function">
    <text evidence="1">One of the components of the core complex of photosystem II (PSII). PSII is a light-driven water:plastoquinone oxidoreductase that uses light energy to abstract electrons from H(2)O, generating O(2) and a proton gradient subsequently used for ATP formation. It consists of a core antenna complex that captures photons, and an electron transfer chain that converts photonic excitation into a charge separation.</text>
</comment>
<comment type="subunit">
    <text evidence="1">PSII is composed of 1 copy each of membrane proteins PsbA, PsbB, PsbC, PsbD, PsbE, PsbF, PsbH, PsbI, PsbJ, PsbK, PsbL, PsbM, PsbT, PsbX, PsbY, PsbZ, Psb30/Ycf12, at least 3 peripheral proteins of the oxygen-evolving complex and a large number of cofactors. It forms dimeric complexes.</text>
</comment>
<comment type="subcellular location">
    <subcellularLocation>
        <location evidence="1">Plastid</location>
        <location evidence="1">Chloroplast thylakoid membrane</location>
        <topology evidence="1">Single-pass membrane protein</topology>
    </subcellularLocation>
</comment>
<comment type="similarity">
    <text evidence="1">Belongs to the PsbK family.</text>
</comment>
<dbReference type="EMBL" id="DQ347958">
    <property type="protein sequence ID" value="ABC56196.1"/>
    <property type="molecule type" value="Genomic_DNA"/>
</dbReference>
<dbReference type="RefSeq" id="YP_538831.1">
    <property type="nucleotide sequence ID" value="NC_007943.1"/>
</dbReference>
<dbReference type="SMR" id="Q2MIK4"/>
<dbReference type="GeneID" id="3989455"/>
<dbReference type="GO" id="GO:0009535">
    <property type="term" value="C:chloroplast thylakoid membrane"/>
    <property type="evidence" value="ECO:0007669"/>
    <property type="project" value="UniProtKB-SubCell"/>
</dbReference>
<dbReference type="GO" id="GO:0009539">
    <property type="term" value="C:photosystem II reaction center"/>
    <property type="evidence" value="ECO:0007669"/>
    <property type="project" value="InterPro"/>
</dbReference>
<dbReference type="GO" id="GO:0015979">
    <property type="term" value="P:photosynthesis"/>
    <property type="evidence" value="ECO:0007669"/>
    <property type="project" value="UniProtKB-UniRule"/>
</dbReference>
<dbReference type="HAMAP" id="MF_00441">
    <property type="entry name" value="PSII_PsbK"/>
    <property type="match status" value="1"/>
</dbReference>
<dbReference type="InterPro" id="IPR003687">
    <property type="entry name" value="PSII_PsbK"/>
</dbReference>
<dbReference type="InterPro" id="IPR037270">
    <property type="entry name" value="PSII_PsbK_sf"/>
</dbReference>
<dbReference type="NCBIfam" id="NF002715">
    <property type="entry name" value="PRK02553.1"/>
    <property type="match status" value="1"/>
</dbReference>
<dbReference type="PANTHER" id="PTHR35325">
    <property type="match status" value="1"/>
</dbReference>
<dbReference type="PANTHER" id="PTHR35325:SF1">
    <property type="entry name" value="PHOTOSYSTEM II REACTION CENTER PROTEIN K"/>
    <property type="match status" value="1"/>
</dbReference>
<dbReference type="Pfam" id="PF02533">
    <property type="entry name" value="PsbK"/>
    <property type="match status" value="1"/>
</dbReference>
<dbReference type="SUPFAM" id="SSF161037">
    <property type="entry name" value="Photosystem II reaction center protein K, PsbK"/>
    <property type="match status" value="1"/>
</dbReference>
<keyword id="KW-0150">Chloroplast</keyword>
<keyword id="KW-0472">Membrane</keyword>
<keyword id="KW-0602">Photosynthesis</keyword>
<keyword id="KW-0604">Photosystem II</keyword>
<keyword id="KW-0934">Plastid</keyword>
<keyword id="KW-0674">Reaction center</keyword>
<keyword id="KW-0793">Thylakoid</keyword>
<keyword id="KW-0812">Transmembrane</keyword>
<keyword id="KW-1133">Transmembrane helix</keyword>
<feature type="propeptide" id="PRO_0000276176" evidence="1">
    <location>
        <begin position="1"/>
        <end position="24"/>
    </location>
</feature>
<feature type="chain" id="PRO_0000276177" description="Photosystem II reaction center protein K" evidence="1">
    <location>
        <begin position="25"/>
        <end position="61"/>
    </location>
</feature>
<feature type="transmembrane region" description="Helical" evidence="1">
    <location>
        <begin position="36"/>
        <end position="56"/>
    </location>
</feature>
<gene>
    <name evidence="1" type="primary">psbK</name>
</gene>